<keyword id="KW-0067">ATP-binding</keyword>
<keyword id="KW-0319">Glycerol metabolism</keyword>
<keyword id="KW-0418">Kinase</keyword>
<keyword id="KW-0547">Nucleotide-binding</keyword>
<keyword id="KW-1185">Reference proteome</keyword>
<keyword id="KW-0808">Transferase</keyword>
<sequence>MVFASAGAAVSGAILALDLGTTGIRALLFDPSGAVAAGAYREVPQIYPQPGWVEHDPQTIWQLTCEVVAEVQAQSAARIAAVGLTNQRETCLLWDAATGTPHGNAIVWQDRRTAALCQKLRAEGWEAPIRQRTGLVIDAYFSATKLAWLLAHRRPYYPGLKAGTIDSWIIWKLTGGRVHATDTSNASRTMLFNLHTRDWDPELLELLAIPAEILPAIKPSLGVLAETDVRVLGYSAPIAGILGDQQAALFAHGCDRPGLVKCTYGTGSFLVAHTGDRPIRSRHQLLTTVAWSDRTSTGYALEGALFTTGASVQWLRDGLGIIETADESEALAASVPDSGGVYFVPALSGLGAPHWDMGARGLLIGLTRGSGRGQIARAVLEAIAFQTREVTDALAADMGTPLTRLKVDGGAVRNNLLMQLQADVLGVPVERPQLIDTTAQGAAFAAGLGTGFWGDYAELVAARPIDRVFESGERQLVLQAHYAVWQRAVERSREWVR</sequence>
<gene>
    <name evidence="1" type="primary">glpK</name>
    <name type="ordered locus">gll1751</name>
</gene>
<organism>
    <name type="scientific">Gloeobacter violaceus (strain ATCC 29082 / PCC 7421)</name>
    <dbReference type="NCBI Taxonomy" id="251221"/>
    <lineage>
        <taxon>Bacteria</taxon>
        <taxon>Bacillati</taxon>
        <taxon>Cyanobacteriota</taxon>
        <taxon>Cyanophyceae</taxon>
        <taxon>Gloeobacterales</taxon>
        <taxon>Gloeobacteraceae</taxon>
        <taxon>Gloeobacter</taxon>
    </lineage>
</organism>
<comment type="function">
    <text evidence="1">Key enzyme in the regulation of glycerol uptake and metabolism. Catalyzes the phosphorylation of glycerol to yield sn-glycerol 3-phosphate.</text>
</comment>
<comment type="catalytic activity">
    <reaction evidence="1">
        <text>glycerol + ATP = sn-glycerol 3-phosphate + ADP + H(+)</text>
        <dbReference type="Rhea" id="RHEA:21644"/>
        <dbReference type="ChEBI" id="CHEBI:15378"/>
        <dbReference type="ChEBI" id="CHEBI:17754"/>
        <dbReference type="ChEBI" id="CHEBI:30616"/>
        <dbReference type="ChEBI" id="CHEBI:57597"/>
        <dbReference type="ChEBI" id="CHEBI:456216"/>
        <dbReference type="EC" id="2.7.1.30"/>
    </reaction>
</comment>
<comment type="activity regulation">
    <text evidence="1">Inhibited by fructose 1,6-bisphosphate (FBP).</text>
</comment>
<comment type="pathway">
    <text evidence="1">Polyol metabolism; glycerol degradation via glycerol kinase pathway; sn-glycerol 3-phosphate from glycerol: step 1/1.</text>
</comment>
<comment type="similarity">
    <text evidence="1">Belongs to the FGGY kinase family.</text>
</comment>
<reference key="1">
    <citation type="journal article" date="2003" name="DNA Res.">
        <title>Complete genome structure of Gloeobacter violaceus PCC 7421, a cyanobacterium that lacks thylakoids.</title>
        <authorList>
            <person name="Nakamura Y."/>
            <person name="Kaneko T."/>
            <person name="Sato S."/>
            <person name="Mimuro M."/>
            <person name="Miyashita H."/>
            <person name="Tsuchiya T."/>
            <person name="Sasamoto S."/>
            <person name="Watanabe A."/>
            <person name="Kawashima K."/>
            <person name="Kishida Y."/>
            <person name="Kiyokawa C."/>
            <person name="Kohara M."/>
            <person name="Matsumoto M."/>
            <person name="Matsuno A."/>
            <person name="Nakazaki N."/>
            <person name="Shimpo S."/>
            <person name="Takeuchi C."/>
            <person name="Yamada M."/>
            <person name="Tabata S."/>
        </authorList>
    </citation>
    <scope>NUCLEOTIDE SEQUENCE [LARGE SCALE GENOMIC DNA]</scope>
    <source>
        <strain>ATCC 29082 / PCC 7421</strain>
    </source>
</reference>
<dbReference type="EC" id="2.7.1.30" evidence="1"/>
<dbReference type="EMBL" id="BA000045">
    <property type="protein sequence ID" value="BAC89692.1"/>
    <property type="molecule type" value="Genomic_DNA"/>
</dbReference>
<dbReference type="RefSeq" id="NP_924697.1">
    <property type="nucleotide sequence ID" value="NC_005125.1"/>
</dbReference>
<dbReference type="RefSeq" id="WP_011141749.1">
    <property type="nucleotide sequence ID" value="NC_005125.1"/>
</dbReference>
<dbReference type="SMR" id="Q7NJT1"/>
<dbReference type="FunCoup" id="Q7NJT1">
    <property type="interactions" value="198"/>
</dbReference>
<dbReference type="STRING" id="251221.gene:10759243"/>
<dbReference type="EnsemblBacteria" id="BAC89692">
    <property type="protein sequence ID" value="BAC89692"/>
    <property type="gene ID" value="BAC89692"/>
</dbReference>
<dbReference type="KEGG" id="gvi:gll1751"/>
<dbReference type="PATRIC" id="fig|251221.4.peg.1781"/>
<dbReference type="eggNOG" id="COG0554">
    <property type="taxonomic scope" value="Bacteria"/>
</dbReference>
<dbReference type="HOGENOM" id="CLU_009281_2_3_3"/>
<dbReference type="InParanoid" id="Q7NJT1"/>
<dbReference type="OrthoDB" id="9805576at2"/>
<dbReference type="PhylomeDB" id="Q7NJT1"/>
<dbReference type="UniPathway" id="UPA00618">
    <property type="reaction ID" value="UER00672"/>
</dbReference>
<dbReference type="Proteomes" id="UP000000557">
    <property type="component" value="Chromosome"/>
</dbReference>
<dbReference type="GO" id="GO:0005829">
    <property type="term" value="C:cytosol"/>
    <property type="evidence" value="ECO:0000318"/>
    <property type="project" value="GO_Central"/>
</dbReference>
<dbReference type="GO" id="GO:0005524">
    <property type="term" value="F:ATP binding"/>
    <property type="evidence" value="ECO:0007669"/>
    <property type="project" value="UniProtKB-UniRule"/>
</dbReference>
<dbReference type="GO" id="GO:0004370">
    <property type="term" value="F:glycerol kinase activity"/>
    <property type="evidence" value="ECO:0000250"/>
    <property type="project" value="UniProtKB"/>
</dbReference>
<dbReference type="GO" id="GO:0019563">
    <property type="term" value="P:glycerol catabolic process"/>
    <property type="evidence" value="ECO:0000318"/>
    <property type="project" value="GO_Central"/>
</dbReference>
<dbReference type="GO" id="GO:0006071">
    <property type="term" value="P:glycerol metabolic process"/>
    <property type="evidence" value="ECO:0000250"/>
    <property type="project" value="UniProtKB"/>
</dbReference>
<dbReference type="GO" id="GO:0006072">
    <property type="term" value="P:glycerol-3-phosphate metabolic process"/>
    <property type="evidence" value="ECO:0007669"/>
    <property type="project" value="InterPro"/>
</dbReference>
<dbReference type="CDD" id="cd07786">
    <property type="entry name" value="FGGY_EcGK_like"/>
    <property type="match status" value="1"/>
</dbReference>
<dbReference type="FunFam" id="3.30.420.40:FF:000007">
    <property type="entry name" value="Glycerol kinase"/>
    <property type="match status" value="1"/>
</dbReference>
<dbReference type="FunFam" id="3.30.420.40:FF:000008">
    <property type="entry name" value="Glycerol kinase"/>
    <property type="match status" value="1"/>
</dbReference>
<dbReference type="Gene3D" id="3.30.420.40">
    <property type="match status" value="2"/>
</dbReference>
<dbReference type="HAMAP" id="MF_00186">
    <property type="entry name" value="Glycerol_kin"/>
    <property type="match status" value="1"/>
</dbReference>
<dbReference type="InterPro" id="IPR043129">
    <property type="entry name" value="ATPase_NBD"/>
</dbReference>
<dbReference type="InterPro" id="IPR000577">
    <property type="entry name" value="Carb_kinase_FGGY"/>
</dbReference>
<dbReference type="InterPro" id="IPR018483">
    <property type="entry name" value="Carb_kinase_FGGY_CS"/>
</dbReference>
<dbReference type="InterPro" id="IPR018485">
    <property type="entry name" value="FGGY_C"/>
</dbReference>
<dbReference type="InterPro" id="IPR018484">
    <property type="entry name" value="FGGY_N"/>
</dbReference>
<dbReference type="InterPro" id="IPR005999">
    <property type="entry name" value="Glycerol_kin"/>
</dbReference>
<dbReference type="NCBIfam" id="TIGR01311">
    <property type="entry name" value="glycerol_kin"/>
    <property type="match status" value="1"/>
</dbReference>
<dbReference type="NCBIfam" id="NF000756">
    <property type="entry name" value="PRK00047.1"/>
    <property type="match status" value="1"/>
</dbReference>
<dbReference type="PANTHER" id="PTHR10196:SF69">
    <property type="entry name" value="GLYCEROL KINASE"/>
    <property type="match status" value="1"/>
</dbReference>
<dbReference type="PANTHER" id="PTHR10196">
    <property type="entry name" value="SUGAR KINASE"/>
    <property type="match status" value="1"/>
</dbReference>
<dbReference type="Pfam" id="PF02782">
    <property type="entry name" value="FGGY_C"/>
    <property type="match status" value="1"/>
</dbReference>
<dbReference type="Pfam" id="PF00370">
    <property type="entry name" value="FGGY_N"/>
    <property type="match status" value="1"/>
</dbReference>
<dbReference type="PIRSF" id="PIRSF000538">
    <property type="entry name" value="GlpK"/>
    <property type="match status" value="1"/>
</dbReference>
<dbReference type="SUPFAM" id="SSF53067">
    <property type="entry name" value="Actin-like ATPase domain"/>
    <property type="match status" value="2"/>
</dbReference>
<dbReference type="PROSITE" id="PS00445">
    <property type="entry name" value="FGGY_KINASES_2"/>
    <property type="match status" value="1"/>
</dbReference>
<proteinExistence type="inferred from homology"/>
<accession>Q7NJT1</accession>
<evidence type="ECO:0000255" key="1">
    <source>
        <dbReference type="HAMAP-Rule" id="MF_00186"/>
    </source>
</evidence>
<feature type="chain" id="PRO_0000059457" description="Glycerol kinase">
    <location>
        <begin position="1"/>
        <end position="497"/>
    </location>
</feature>
<feature type="binding site" evidence="1">
    <location>
        <position position="21"/>
    </location>
    <ligand>
        <name>ADP</name>
        <dbReference type="ChEBI" id="CHEBI:456216"/>
    </ligand>
</feature>
<feature type="binding site" evidence="1">
    <location>
        <position position="21"/>
    </location>
    <ligand>
        <name>ATP</name>
        <dbReference type="ChEBI" id="CHEBI:30616"/>
    </ligand>
</feature>
<feature type="binding site" evidence="1">
    <location>
        <position position="21"/>
    </location>
    <ligand>
        <name>sn-glycerol 3-phosphate</name>
        <dbReference type="ChEBI" id="CHEBI:57597"/>
    </ligand>
</feature>
<feature type="binding site" evidence="1">
    <location>
        <position position="22"/>
    </location>
    <ligand>
        <name>ATP</name>
        <dbReference type="ChEBI" id="CHEBI:30616"/>
    </ligand>
</feature>
<feature type="binding site" evidence="1">
    <location>
        <position position="25"/>
    </location>
    <ligand>
        <name>ADP</name>
        <dbReference type="ChEBI" id="CHEBI:456216"/>
    </ligand>
</feature>
<feature type="binding site" evidence="1">
    <location>
        <position position="88"/>
    </location>
    <ligand>
        <name>glycerol</name>
        <dbReference type="ChEBI" id="CHEBI:17754"/>
    </ligand>
</feature>
<feature type="binding site" evidence="1">
    <location>
        <position position="88"/>
    </location>
    <ligand>
        <name>sn-glycerol 3-phosphate</name>
        <dbReference type="ChEBI" id="CHEBI:57597"/>
    </ligand>
</feature>
<feature type="binding site" evidence="1">
    <location>
        <position position="89"/>
    </location>
    <ligand>
        <name>glycerol</name>
        <dbReference type="ChEBI" id="CHEBI:17754"/>
    </ligand>
</feature>
<feature type="binding site" evidence="1">
    <location>
        <position position="89"/>
    </location>
    <ligand>
        <name>sn-glycerol 3-phosphate</name>
        <dbReference type="ChEBI" id="CHEBI:57597"/>
    </ligand>
</feature>
<feature type="binding site" evidence="1">
    <location>
        <position position="140"/>
    </location>
    <ligand>
        <name>glycerol</name>
        <dbReference type="ChEBI" id="CHEBI:17754"/>
    </ligand>
</feature>
<feature type="binding site" evidence="1">
    <location>
        <position position="140"/>
    </location>
    <ligand>
        <name>sn-glycerol 3-phosphate</name>
        <dbReference type="ChEBI" id="CHEBI:57597"/>
    </ligand>
</feature>
<feature type="binding site" evidence="1">
    <location>
        <position position="244"/>
    </location>
    <ligand>
        <name>glycerol</name>
        <dbReference type="ChEBI" id="CHEBI:17754"/>
    </ligand>
</feature>
<feature type="binding site" evidence="1">
    <location>
        <position position="244"/>
    </location>
    <ligand>
        <name>sn-glycerol 3-phosphate</name>
        <dbReference type="ChEBI" id="CHEBI:57597"/>
    </ligand>
</feature>
<feature type="binding site" evidence="1">
    <location>
        <position position="245"/>
    </location>
    <ligand>
        <name>glycerol</name>
        <dbReference type="ChEBI" id="CHEBI:17754"/>
    </ligand>
</feature>
<feature type="binding site" evidence="1">
    <location>
        <position position="266"/>
    </location>
    <ligand>
        <name>ADP</name>
        <dbReference type="ChEBI" id="CHEBI:456216"/>
    </ligand>
</feature>
<feature type="binding site" evidence="1">
    <location>
        <position position="266"/>
    </location>
    <ligand>
        <name>ATP</name>
        <dbReference type="ChEBI" id="CHEBI:30616"/>
    </ligand>
</feature>
<feature type="binding site" evidence="1">
    <location>
        <position position="309"/>
    </location>
    <ligand>
        <name>ADP</name>
        <dbReference type="ChEBI" id="CHEBI:456216"/>
    </ligand>
</feature>
<feature type="binding site" evidence="1">
    <location>
        <position position="309"/>
    </location>
    <ligand>
        <name>ATP</name>
        <dbReference type="ChEBI" id="CHEBI:30616"/>
    </ligand>
</feature>
<feature type="binding site" evidence="1">
    <location>
        <position position="313"/>
    </location>
    <ligand>
        <name>ATP</name>
        <dbReference type="ChEBI" id="CHEBI:30616"/>
    </ligand>
</feature>
<feature type="binding site" evidence="1">
    <location>
        <position position="410"/>
    </location>
    <ligand>
        <name>ADP</name>
        <dbReference type="ChEBI" id="CHEBI:456216"/>
    </ligand>
</feature>
<feature type="binding site" evidence="1">
    <location>
        <position position="410"/>
    </location>
    <ligand>
        <name>ATP</name>
        <dbReference type="ChEBI" id="CHEBI:30616"/>
    </ligand>
</feature>
<feature type="binding site" evidence="1">
    <location>
        <position position="414"/>
    </location>
    <ligand>
        <name>ADP</name>
        <dbReference type="ChEBI" id="CHEBI:456216"/>
    </ligand>
</feature>
<name>GLPK_GLOVI</name>
<protein>
    <recommendedName>
        <fullName evidence="1">Glycerol kinase</fullName>
        <ecNumber evidence="1">2.7.1.30</ecNumber>
    </recommendedName>
    <alternativeName>
        <fullName evidence="1">ATP:glycerol 3-phosphotransferase</fullName>
    </alternativeName>
    <alternativeName>
        <fullName evidence="1">Glycerokinase</fullName>
        <shortName evidence="1">GK</shortName>
    </alternativeName>
</protein>